<dbReference type="EMBL" id="AE016820">
    <property type="protein sequence ID" value="AAS54418.1"/>
    <property type="molecule type" value="Genomic_DNA"/>
</dbReference>
<dbReference type="RefSeq" id="NP_986594.1">
    <property type="nucleotide sequence ID" value="NM_211656.1"/>
</dbReference>
<dbReference type="SMR" id="Q750M8"/>
<dbReference type="FunCoup" id="Q750M8">
    <property type="interactions" value="62"/>
</dbReference>
<dbReference type="STRING" id="284811.Q750M8"/>
<dbReference type="GlyCosmos" id="Q750M8">
    <property type="glycosylation" value="1 site, No reported glycans"/>
</dbReference>
<dbReference type="EnsemblFungi" id="AAS54418">
    <property type="protein sequence ID" value="AAS54418"/>
    <property type="gene ID" value="AGOS_AGL072W"/>
</dbReference>
<dbReference type="GeneID" id="4622893"/>
<dbReference type="KEGG" id="ago:AGOS_AGL072W"/>
<dbReference type="eggNOG" id="ENOG502S3AC">
    <property type="taxonomic scope" value="Eukaryota"/>
</dbReference>
<dbReference type="HOGENOM" id="CLU_118698_1_0_1"/>
<dbReference type="InParanoid" id="Q750M8"/>
<dbReference type="OMA" id="IYAQWLG"/>
<dbReference type="OrthoDB" id="5591789at2759"/>
<dbReference type="Proteomes" id="UP000000591">
    <property type="component" value="Chromosome VII"/>
</dbReference>
<dbReference type="GO" id="GO:0000139">
    <property type="term" value="C:Golgi membrane"/>
    <property type="evidence" value="ECO:0000318"/>
    <property type="project" value="GO_Central"/>
</dbReference>
<dbReference type="GO" id="GO:0016192">
    <property type="term" value="P:vesicle-mediated transport"/>
    <property type="evidence" value="ECO:0000318"/>
    <property type="project" value="GO_Central"/>
</dbReference>
<dbReference type="InterPro" id="IPR019365">
    <property type="entry name" value="TVP18/Ca-channel_flower"/>
</dbReference>
<dbReference type="PANTHER" id="PTHR13314">
    <property type="entry name" value="CALCIUM CHANNEL FLOWER HOMOLOG"/>
    <property type="match status" value="1"/>
</dbReference>
<dbReference type="PANTHER" id="PTHR13314:SF2">
    <property type="entry name" value="CALCIUM CHANNEL FLOWER HOMOLOG"/>
    <property type="match status" value="1"/>
</dbReference>
<dbReference type="Pfam" id="PF10233">
    <property type="entry name" value="Cg6151-P"/>
    <property type="match status" value="1"/>
</dbReference>
<dbReference type="SMART" id="SM01077">
    <property type="entry name" value="Cg6151-P"/>
    <property type="match status" value="1"/>
</dbReference>
<protein>
    <recommendedName>
        <fullName>Golgi apparatus membrane protein TVP18</fullName>
    </recommendedName>
</protein>
<reference key="1">
    <citation type="journal article" date="2004" name="Science">
        <title>The Ashbya gossypii genome as a tool for mapping the ancient Saccharomyces cerevisiae genome.</title>
        <authorList>
            <person name="Dietrich F.S."/>
            <person name="Voegeli S."/>
            <person name="Brachat S."/>
            <person name="Lerch A."/>
            <person name="Gates K."/>
            <person name="Steiner S."/>
            <person name="Mohr C."/>
            <person name="Poehlmann R."/>
            <person name="Luedi P."/>
            <person name="Choi S."/>
            <person name="Wing R.A."/>
            <person name="Flavier A."/>
            <person name="Gaffney T.D."/>
            <person name="Philippsen P."/>
        </authorList>
    </citation>
    <scope>NUCLEOTIDE SEQUENCE [LARGE SCALE GENOMIC DNA]</scope>
    <source>
        <strain>ATCC 10895 / CBS 109.51 / FGSC 9923 / NRRL Y-1056</strain>
    </source>
</reference>
<reference key="2">
    <citation type="journal article" date="2013" name="G3 (Bethesda)">
        <title>Genomes of Ashbya fungi isolated from insects reveal four mating-type loci, numerous translocations, lack of transposons, and distinct gene duplications.</title>
        <authorList>
            <person name="Dietrich F.S."/>
            <person name="Voegeli S."/>
            <person name="Kuo S."/>
            <person name="Philippsen P."/>
        </authorList>
    </citation>
    <scope>GENOME REANNOTATION</scope>
    <source>
        <strain>ATCC 10895 / CBS 109.51 / FGSC 9923 / NRRL Y-1056</strain>
    </source>
</reference>
<organism>
    <name type="scientific">Eremothecium gossypii (strain ATCC 10895 / CBS 109.51 / FGSC 9923 / NRRL Y-1056)</name>
    <name type="common">Yeast</name>
    <name type="synonym">Ashbya gossypii</name>
    <dbReference type="NCBI Taxonomy" id="284811"/>
    <lineage>
        <taxon>Eukaryota</taxon>
        <taxon>Fungi</taxon>
        <taxon>Dikarya</taxon>
        <taxon>Ascomycota</taxon>
        <taxon>Saccharomycotina</taxon>
        <taxon>Saccharomycetes</taxon>
        <taxon>Saccharomycetales</taxon>
        <taxon>Saccharomycetaceae</taxon>
        <taxon>Eremothecium</taxon>
    </lineage>
</organism>
<keyword id="KW-0325">Glycoprotein</keyword>
<keyword id="KW-0333">Golgi apparatus</keyword>
<keyword id="KW-0472">Membrane</keyword>
<keyword id="KW-1185">Reference proteome</keyword>
<keyword id="KW-0812">Transmembrane</keyword>
<keyword id="KW-1133">Transmembrane helix</keyword>
<proteinExistence type="inferred from homology"/>
<accession>Q750M8</accession>
<feature type="chain" id="PRO_0000343009" description="Golgi apparatus membrane protein TVP18">
    <location>
        <begin position="1"/>
        <end position="167"/>
    </location>
</feature>
<feature type="transmembrane region" description="Helical" evidence="2">
    <location>
        <begin position="27"/>
        <end position="47"/>
    </location>
</feature>
<feature type="transmembrane region" description="Helical" evidence="2">
    <location>
        <begin position="49"/>
        <end position="69"/>
    </location>
</feature>
<feature type="transmembrane region" description="Helical" evidence="2">
    <location>
        <begin position="98"/>
        <end position="114"/>
    </location>
</feature>
<feature type="transmembrane region" description="Helical" evidence="2">
    <location>
        <begin position="118"/>
        <end position="138"/>
    </location>
</feature>
<feature type="glycosylation site" description="N-linked (GlcNAc...) asparagine" evidence="2">
    <location>
        <position position="22"/>
    </location>
</feature>
<evidence type="ECO:0000250" key="1"/>
<evidence type="ECO:0000255" key="2"/>
<evidence type="ECO:0000305" key="3"/>
<gene>
    <name type="primary">TVP18</name>
    <name type="ordered locus">AGL072W</name>
</gene>
<comment type="function">
    <text evidence="1">Golgi membrane protein involved in vesicular trafficking.</text>
</comment>
<comment type="subcellular location">
    <subcellularLocation>
        <location evidence="1">Golgi apparatus membrane</location>
        <topology evidence="1">Multi-pass membrane protein</topology>
    </subcellularLocation>
</comment>
<comment type="similarity">
    <text evidence="3">Belongs to the TVP18 family.</text>
</comment>
<sequence>MALSWKSFVNVPGILADLRSFNFSVYGRWFGYINILLCLALGIANIFHFSIVIAFAIVAIVQGLLLIFVEVPILLKICPLSDNFIGLVKKCDTNGRRTLLYTALAIVQYASLSVQVTSLLAVAIGLTISAIFYGTGYLKKQEFLEGNVIRNPTDPAFMREAAVREVL</sequence>
<name>TVP18_EREGS</name>